<protein>
    <recommendedName>
        <fullName evidence="1">Coproheme decarboxylase</fullName>
        <ecNumber evidence="1">1.3.98.5</ecNumber>
    </recommendedName>
    <alternativeName>
        <fullName evidence="1">Coproheme III oxidative decarboxylase</fullName>
    </alternativeName>
    <alternativeName>
        <fullName evidence="1">Hydrogen peroxide-dependent heme synthase</fullName>
    </alternativeName>
</protein>
<comment type="function">
    <text evidence="1">Involved in coproporphyrin-dependent heme b biosynthesis. Catalyzes the decarboxylation of Fe-coproporphyrin III (coproheme) to heme b (protoheme IX), the last step of the pathway. The reaction occurs in a stepwise manner with a three-propionate intermediate.</text>
</comment>
<comment type="catalytic activity">
    <reaction evidence="1">
        <text>Fe-coproporphyrin III + 2 H2O2 + 2 H(+) = heme b + 2 CO2 + 4 H2O</text>
        <dbReference type="Rhea" id="RHEA:56516"/>
        <dbReference type="ChEBI" id="CHEBI:15377"/>
        <dbReference type="ChEBI" id="CHEBI:15378"/>
        <dbReference type="ChEBI" id="CHEBI:16240"/>
        <dbReference type="ChEBI" id="CHEBI:16526"/>
        <dbReference type="ChEBI" id="CHEBI:60344"/>
        <dbReference type="ChEBI" id="CHEBI:68438"/>
        <dbReference type="EC" id="1.3.98.5"/>
    </reaction>
    <physiologicalReaction direction="left-to-right" evidence="1">
        <dbReference type="Rhea" id="RHEA:56517"/>
    </physiologicalReaction>
</comment>
<comment type="catalytic activity">
    <reaction evidence="1">
        <text>Fe-coproporphyrin III + H2O2 + H(+) = harderoheme III + CO2 + 2 H2O</text>
        <dbReference type="Rhea" id="RHEA:57940"/>
        <dbReference type="ChEBI" id="CHEBI:15377"/>
        <dbReference type="ChEBI" id="CHEBI:15378"/>
        <dbReference type="ChEBI" id="CHEBI:16240"/>
        <dbReference type="ChEBI" id="CHEBI:16526"/>
        <dbReference type="ChEBI" id="CHEBI:68438"/>
        <dbReference type="ChEBI" id="CHEBI:142463"/>
    </reaction>
    <physiologicalReaction direction="left-to-right" evidence="1">
        <dbReference type="Rhea" id="RHEA:57941"/>
    </physiologicalReaction>
</comment>
<comment type="catalytic activity">
    <reaction evidence="1">
        <text>harderoheme III + H2O2 + H(+) = heme b + CO2 + 2 H2O</text>
        <dbReference type="Rhea" id="RHEA:57944"/>
        <dbReference type="ChEBI" id="CHEBI:15377"/>
        <dbReference type="ChEBI" id="CHEBI:15378"/>
        <dbReference type="ChEBI" id="CHEBI:16240"/>
        <dbReference type="ChEBI" id="CHEBI:16526"/>
        <dbReference type="ChEBI" id="CHEBI:60344"/>
        <dbReference type="ChEBI" id="CHEBI:142463"/>
    </reaction>
    <physiologicalReaction direction="left-to-right" evidence="1">
        <dbReference type="Rhea" id="RHEA:57945"/>
    </physiologicalReaction>
</comment>
<comment type="cofactor">
    <cofactor evidence="1">
        <name>Fe-coproporphyrin III</name>
        <dbReference type="ChEBI" id="CHEBI:68438"/>
    </cofactor>
    <text evidence="1">Fe-coproporphyrin III acts both as a substrate and a redox cofactor.</text>
</comment>
<comment type="pathway">
    <text evidence="1">Porphyrin-containing compound metabolism; protoheme biosynthesis.</text>
</comment>
<comment type="similarity">
    <text evidence="1">Belongs to the ChdC family. Type 1 subfamily.</text>
</comment>
<organism>
    <name type="scientific">Staphylococcus epidermidis (strain ATCC 12228 / FDA PCI 1200)</name>
    <dbReference type="NCBI Taxonomy" id="176280"/>
    <lineage>
        <taxon>Bacteria</taxon>
        <taxon>Bacillati</taxon>
        <taxon>Bacillota</taxon>
        <taxon>Bacilli</taxon>
        <taxon>Bacillales</taxon>
        <taxon>Staphylococcaceae</taxon>
        <taxon>Staphylococcus</taxon>
    </lineage>
</organism>
<accession>Q8CTQ2</accession>
<name>CHDC_STAES</name>
<sequence length="249" mass="29585">MSEAAETLDGWYSLHLFYAVDWTTFRLIAEDDREAMITELETFIKDKTVARESHQGDHAIYNITGQKADLLLWFLRPEMKELNQIENEFNKLRIADYLIPTYSYVSVIELSNYLAGKSDEDPYENPHVKARLYPELPHSEYICFYPMDKRRNETYNWYMLPIEDRKTLMYNHGMIGRKYAGKIKQFITGSVGFDDYEWGVTLFSNDVLQFKKIVYEMRFDETTARYGEFGSFYIGHILNIEDFKQFFSI</sequence>
<proteinExistence type="inferred from homology"/>
<dbReference type="EC" id="1.3.98.5" evidence="1"/>
<dbReference type="EMBL" id="AE015929">
    <property type="protein sequence ID" value="AAO03955.1"/>
    <property type="molecule type" value="Genomic_DNA"/>
</dbReference>
<dbReference type="RefSeq" id="NP_763913.1">
    <property type="nucleotide sequence ID" value="NC_004461.1"/>
</dbReference>
<dbReference type="SMR" id="Q8CTQ2"/>
<dbReference type="KEGG" id="sep:SE_0358"/>
<dbReference type="PATRIC" id="fig|176280.10.peg.333"/>
<dbReference type="eggNOG" id="COG3253">
    <property type="taxonomic scope" value="Bacteria"/>
</dbReference>
<dbReference type="HOGENOM" id="CLU_063226_1_0_9"/>
<dbReference type="OrthoDB" id="9773646at2"/>
<dbReference type="UniPathway" id="UPA00252"/>
<dbReference type="Proteomes" id="UP000001411">
    <property type="component" value="Chromosome"/>
</dbReference>
<dbReference type="GO" id="GO:0020037">
    <property type="term" value="F:heme binding"/>
    <property type="evidence" value="ECO:0007669"/>
    <property type="project" value="InterPro"/>
</dbReference>
<dbReference type="GO" id="GO:0046872">
    <property type="term" value="F:metal ion binding"/>
    <property type="evidence" value="ECO:0007669"/>
    <property type="project" value="UniProtKB-KW"/>
</dbReference>
<dbReference type="GO" id="GO:0016634">
    <property type="term" value="F:oxidoreductase activity, acting on the CH-CH group of donors, oxygen as acceptor"/>
    <property type="evidence" value="ECO:0007669"/>
    <property type="project" value="UniProtKB-UniRule"/>
</dbReference>
<dbReference type="GO" id="GO:0004601">
    <property type="term" value="F:peroxidase activity"/>
    <property type="evidence" value="ECO:0007669"/>
    <property type="project" value="InterPro"/>
</dbReference>
<dbReference type="GO" id="GO:0006785">
    <property type="term" value="P:heme B biosynthetic process"/>
    <property type="evidence" value="ECO:0007669"/>
    <property type="project" value="UniProtKB-UniRule"/>
</dbReference>
<dbReference type="Gene3D" id="3.30.70.1030">
    <property type="entry name" value="Apc35880, domain 1"/>
    <property type="match status" value="2"/>
</dbReference>
<dbReference type="HAMAP" id="MF_01442">
    <property type="entry name" value="Coproheme_decarbox_1"/>
    <property type="match status" value="1"/>
</dbReference>
<dbReference type="InterPro" id="IPR031332">
    <property type="entry name" value="CHDC"/>
</dbReference>
<dbReference type="InterPro" id="IPR010644">
    <property type="entry name" value="ChdC/CLD"/>
</dbReference>
<dbReference type="InterPro" id="IPR011008">
    <property type="entry name" value="Dimeric_a/b-barrel"/>
</dbReference>
<dbReference type="NCBIfam" id="NF008913">
    <property type="entry name" value="PRK12276.1"/>
    <property type="match status" value="1"/>
</dbReference>
<dbReference type="PANTHER" id="PTHR36843:SF1">
    <property type="entry name" value="COPROHEME DECARBOXYLASE"/>
    <property type="match status" value="1"/>
</dbReference>
<dbReference type="PANTHER" id="PTHR36843">
    <property type="entry name" value="HEME-DEPENDENT PEROXIDASE YWFI-RELATED"/>
    <property type="match status" value="1"/>
</dbReference>
<dbReference type="Pfam" id="PF06778">
    <property type="entry name" value="Chlor_dismutase"/>
    <property type="match status" value="1"/>
</dbReference>
<dbReference type="SUPFAM" id="SSF54909">
    <property type="entry name" value="Dimeric alpha+beta barrel"/>
    <property type="match status" value="1"/>
</dbReference>
<keyword id="KW-0349">Heme</keyword>
<keyword id="KW-0350">Heme biosynthesis</keyword>
<keyword id="KW-0408">Iron</keyword>
<keyword id="KW-0479">Metal-binding</keyword>
<keyword id="KW-0560">Oxidoreductase</keyword>
<gene>
    <name evidence="1" type="primary">chdC</name>
    <name type="ordered locus">SE_0358</name>
</gene>
<reference key="1">
    <citation type="journal article" date="2003" name="Mol. Microbiol.">
        <title>Genome-based analysis of virulence genes in a non-biofilm-forming Staphylococcus epidermidis strain (ATCC 12228).</title>
        <authorList>
            <person name="Zhang Y.-Q."/>
            <person name="Ren S.-X."/>
            <person name="Li H.-L."/>
            <person name="Wang Y.-X."/>
            <person name="Fu G."/>
            <person name="Yang J."/>
            <person name="Qin Z.-Q."/>
            <person name="Miao Y.-G."/>
            <person name="Wang W.-Y."/>
            <person name="Chen R.-S."/>
            <person name="Shen Y."/>
            <person name="Chen Z."/>
            <person name="Yuan Z.-H."/>
            <person name="Zhao G.-P."/>
            <person name="Qu D."/>
            <person name="Danchin A."/>
            <person name="Wen Y.-M."/>
        </authorList>
    </citation>
    <scope>NUCLEOTIDE SEQUENCE [LARGE SCALE GENOMIC DNA]</scope>
    <source>
        <strain>ATCC 12228 / FDA PCI 1200</strain>
    </source>
</reference>
<feature type="chain" id="PRO_0000294055" description="Coproheme decarboxylase">
    <location>
        <begin position="1"/>
        <end position="249"/>
    </location>
</feature>
<feature type="active site" evidence="1">
    <location>
        <position position="145"/>
    </location>
</feature>
<feature type="binding site" evidence="1">
    <location>
        <position position="131"/>
    </location>
    <ligand>
        <name>Fe-coproporphyrin III</name>
        <dbReference type="ChEBI" id="CHEBI:68438"/>
    </ligand>
</feature>
<feature type="binding site" evidence="1">
    <location>
        <begin position="145"/>
        <end position="149"/>
    </location>
    <ligand>
        <name>Fe-coproporphyrin III</name>
        <dbReference type="ChEBI" id="CHEBI:68438"/>
    </ligand>
</feature>
<feature type="binding site" description="axial binding residue" evidence="1">
    <location>
        <position position="172"/>
    </location>
    <ligand>
        <name>Fe-coproporphyrin III</name>
        <dbReference type="ChEBI" id="CHEBI:68438"/>
    </ligand>
    <ligandPart>
        <name>Fe</name>
        <dbReference type="ChEBI" id="CHEBI:18248"/>
    </ligandPart>
</feature>
<feature type="binding site" evidence="1">
    <location>
        <position position="185"/>
    </location>
    <ligand>
        <name>Fe-coproporphyrin III</name>
        <dbReference type="ChEBI" id="CHEBI:68438"/>
    </ligand>
</feature>
<evidence type="ECO:0000255" key="1">
    <source>
        <dbReference type="HAMAP-Rule" id="MF_01442"/>
    </source>
</evidence>